<dbReference type="EMBL" id="BT044805">
    <property type="protein sequence ID" value="ACI33067.1"/>
    <property type="molecule type" value="mRNA"/>
</dbReference>
<dbReference type="STRING" id="8030.ENSSSAP00000061245"/>
<dbReference type="GlyCosmos" id="B5X186">
    <property type="glycosylation" value="1 site, No reported glycans"/>
</dbReference>
<dbReference type="PaxDb" id="8030-ENSSSAP00000061245"/>
<dbReference type="Ensembl" id="ENSSSAT00020051345">
    <property type="protein sequence ID" value="ENSSSAP00020044312"/>
    <property type="gene ID" value="ENSSSAG00020019438"/>
</dbReference>
<dbReference type="Ensembl" id="ENSSSAT00070006115">
    <property type="protein sequence ID" value="ENSSSAP00070005688"/>
    <property type="gene ID" value="ENSSSAG00070004115"/>
</dbReference>
<dbReference type="Ensembl" id="ENSSSAT00075023391">
    <property type="protein sequence ID" value="ENSSSAP00075015822"/>
    <property type="gene ID" value="ENSSSAG00075011396"/>
</dbReference>
<dbReference type="GeneID" id="106576025"/>
<dbReference type="KEGG" id="sasa:106576025"/>
<dbReference type="OMA" id="FEADVDH"/>
<dbReference type="Proteomes" id="UP000087266">
    <property type="component" value="Chromosome ssa17"/>
</dbReference>
<dbReference type="Bgee" id="ENSSSAG00000070260">
    <property type="expression patterns" value="Expressed in notochord and 25 other cell types or tissues"/>
</dbReference>
<dbReference type="GO" id="GO:0005789">
    <property type="term" value="C:endoplasmic reticulum membrane"/>
    <property type="evidence" value="ECO:0007669"/>
    <property type="project" value="UniProtKB-SubCell"/>
</dbReference>
<dbReference type="GO" id="GO:0005576">
    <property type="term" value="C:extracellular region"/>
    <property type="evidence" value="ECO:0007669"/>
    <property type="project" value="UniProtKB-SubCell"/>
</dbReference>
<dbReference type="GO" id="GO:0005794">
    <property type="term" value="C:Golgi apparatus"/>
    <property type="evidence" value="ECO:0007669"/>
    <property type="project" value="UniProtKB-SubCell"/>
</dbReference>
<dbReference type="GO" id="GO:0042470">
    <property type="term" value="C:melanosome"/>
    <property type="evidence" value="ECO:0007669"/>
    <property type="project" value="UniProtKB-SubCell"/>
</dbReference>
<dbReference type="GO" id="GO:0033018">
    <property type="term" value="C:sarcoplasmic reticulum lumen"/>
    <property type="evidence" value="ECO:0007669"/>
    <property type="project" value="UniProtKB-SubCell"/>
</dbReference>
<dbReference type="GO" id="GO:0005509">
    <property type="term" value="F:calcium ion binding"/>
    <property type="evidence" value="ECO:0007669"/>
    <property type="project" value="InterPro"/>
</dbReference>
<dbReference type="FunFam" id="1.10.238.10:FF:000090">
    <property type="entry name" value="calumenin isoform X2"/>
    <property type="match status" value="1"/>
</dbReference>
<dbReference type="FunFam" id="1.10.238.10:FF:000109">
    <property type="entry name" value="calumenin isoform X2"/>
    <property type="match status" value="1"/>
</dbReference>
<dbReference type="FunFam" id="1.10.238.10:FF:000110">
    <property type="entry name" value="calumenin isoform X2"/>
    <property type="match status" value="1"/>
</dbReference>
<dbReference type="Gene3D" id="1.10.238.10">
    <property type="entry name" value="EF-hand"/>
    <property type="match status" value="3"/>
</dbReference>
<dbReference type="InterPro" id="IPR011992">
    <property type="entry name" value="EF-hand-dom_pair"/>
</dbReference>
<dbReference type="InterPro" id="IPR018247">
    <property type="entry name" value="EF_Hand_1_Ca_BS"/>
</dbReference>
<dbReference type="InterPro" id="IPR002048">
    <property type="entry name" value="EF_hand_dom"/>
</dbReference>
<dbReference type="PANTHER" id="PTHR10827:SF76">
    <property type="entry name" value="CALUMENIN"/>
    <property type="match status" value="1"/>
</dbReference>
<dbReference type="PANTHER" id="PTHR10827">
    <property type="entry name" value="RETICULOCALBIN"/>
    <property type="match status" value="1"/>
</dbReference>
<dbReference type="Pfam" id="PF13202">
    <property type="entry name" value="EF-hand_5"/>
    <property type="match status" value="1"/>
</dbReference>
<dbReference type="Pfam" id="PF13499">
    <property type="entry name" value="EF-hand_7"/>
    <property type="match status" value="2"/>
</dbReference>
<dbReference type="SMART" id="SM00054">
    <property type="entry name" value="EFh"/>
    <property type="match status" value="5"/>
</dbReference>
<dbReference type="SUPFAM" id="SSF47473">
    <property type="entry name" value="EF-hand"/>
    <property type="match status" value="2"/>
</dbReference>
<dbReference type="PROSITE" id="PS00018">
    <property type="entry name" value="EF_HAND_1"/>
    <property type="match status" value="4"/>
</dbReference>
<dbReference type="PROSITE" id="PS50222">
    <property type="entry name" value="EF_HAND_2"/>
    <property type="match status" value="6"/>
</dbReference>
<reference key="1">
    <citation type="journal article" date="2010" name="BMC Genomics">
        <title>Salmo salar and Esox lucius full-length cDNA sequences reveal changes in evolutionary pressures on a post-tetraploidization genome.</title>
        <authorList>
            <person name="Leong J.S."/>
            <person name="Jantzen S.G."/>
            <person name="von Schalburg K.R."/>
            <person name="Cooper G.A."/>
            <person name="Messmer A.M."/>
            <person name="Liao N.Y."/>
            <person name="Munro S."/>
            <person name="Moore R."/>
            <person name="Holt R.A."/>
            <person name="Jones S.J."/>
            <person name="Davidson W.S."/>
            <person name="Koop B.F."/>
        </authorList>
    </citation>
    <scope>NUCLEOTIDE SEQUENCE [LARGE SCALE MRNA]</scope>
    <source>
        <tissue>Brain</tissue>
    </source>
</reference>
<protein>
    <recommendedName>
        <fullName>Calumenin-A</fullName>
    </recommendedName>
</protein>
<accession>B5X186</accession>
<evidence type="ECO:0000250" key="1"/>
<evidence type="ECO:0000250" key="2">
    <source>
        <dbReference type="UniProtKB" id="O43852"/>
    </source>
</evidence>
<evidence type="ECO:0000255" key="3"/>
<evidence type="ECO:0000255" key="4">
    <source>
        <dbReference type="PROSITE-ProRule" id="PRU00448"/>
    </source>
</evidence>
<evidence type="ECO:0000305" key="5"/>
<comment type="function">
    <text evidence="1">Involved in regulation of vitamin K-dependent carboxylation of multiple N-terminal glutamate residues. Seems to inhibit gamma-carboxylase ggcx. Binds 7 calcium ions with a low affinity (By similarity).</text>
</comment>
<comment type="subunit">
    <text evidence="1">Interacts with ggcx.</text>
</comment>
<comment type="subcellular location">
    <subcellularLocation>
        <location evidence="2">Endoplasmic reticulum membrane</location>
    </subcellularLocation>
    <subcellularLocation>
        <location evidence="2">Golgi apparatus</location>
    </subcellularLocation>
    <subcellularLocation>
        <location evidence="2">Secreted</location>
    </subcellularLocation>
    <subcellularLocation>
        <location evidence="2">Melanosome</location>
    </subcellularLocation>
    <subcellularLocation>
        <location evidence="2">Sarcoplasmic reticulum lumen</location>
    </subcellularLocation>
</comment>
<comment type="similarity">
    <text evidence="5">Belongs to the CREC family.</text>
</comment>
<proteinExistence type="evidence at transcript level"/>
<keyword id="KW-0106">Calcium</keyword>
<keyword id="KW-0256">Endoplasmic reticulum</keyword>
<keyword id="KW-0325">Glycoprotein</keyword>
<keyword id="KW-0333">Golgi apparatus</keyword>
<keyword id="KW-0472">Membrane</keyword>
<keyword id="KW-0479">Metal-binding</keyword>
<keyword id="KW-1185">Reference proteome</keyword>
<keyword id="KW-0677">Repeat</keyword>
<keyword id="KW-0703">Sarcoplasmic reticulum</keyword>
<keyword id="KW-0964">Secreted</keyword>
<keyword id="KW-0732">Signal</keyword>
<organism>
    <name type="scientific">Salmo salar</name>
    <name type="common">Atlantic salmon</name>
    <dbReference type="NCBI Taxonomy" id="8030"/>
    <lineage>
        <taxon>Eukaryota</taxon>
        <taxon>Metazoa</taxon>
        <taxon>Chordata</taxon>
        <taxon>Craniata</taxon>
        <taxon>Vertebrata</taxon>
        <taxon>Euteleostomi</taxon>
        <taxon>Actinopterygii</taxon>
        <taxon>Neopterygii</taxon>
        <taxon>Teleostei</taxon>
        <taxon>Protacanthopterygii</taxon>
        <taxon>Salmoniformes</taxon>
        <taxon>Salmonidae</taxon>
        <taxon>Salmoninae</taxon>
        <taxon>Salmo</taxon>
    </lineage>
</organism>
<feature type="signal peptide" evidence="1">
    <location>
        <begin position="1"/>
        <end position="19"/>
    </location>
</feature>
<feature type="chain" id="PRO_0000364195" description="Calumenin-A">
    <location>
        <begin position="20"/>
        <end position="315"/>
    </location>
</feature>
<feature type="domain" description="EF-hand 1" evidence="4">
    <location>
        <begin position="68"/>
        <end position="103"/>
    </location>
</feature>
<feature type="domain" description="EF-hand 2" evidence="4">
    <location>
        <begin position="104"/>
        <end position="139"/>
    </location>
</feature>
<feature type="domain" description="EF-hand 3" evidence="4">
    <location>
        <begin position="151"/>
        <end position="186"/>
    </location>
</feature>
<feature type="domain" description="EF-hand 4" evidence="4">
    <location>
        <begin position="188"/>
        <end position="223"/>
    </location>
</feature>
<feature type="domain" description="EF-hand 5" evidence="4">
    <location>
        <begin position="229"/>
        <end position="264"/>
    </location>
</feature>
<feature type="domain" description="EF-hand 6" evidence="4">
    <location>
        <begin position="265"/>
        <end position="300"/>
    </location>
</feature>
<feature type="short sequence motif" description="Prevents secretion from ER" evidence="1">
    <location>
        <begin position="312"/>
        <end position="315"/>
    </location>
</feature>
<feature type="binding site" evidence="4">
    <location>
        <position position="81"/>
    </location>
    <ligand>
        <name>Ca(2+)</name>
        <dbReference type="ChEBI" id="CHEBI:29108"/>
        <label>1</label>
    </ligand>
</feature>
<feature type="binding site" evidence="4">
    <location>
        <position position="83"/>
    </location>
    <ligand>
        <name>Ca(2+)</name>
        <dbReference type="ChEBI" id="CHEBI:29108"/>
        <label>1</label>
    </ligand>
</feature>
<feature type="binding site" evidence="4">
    <location>
        <position position="85"/>
    </location>
    <ligand>
        <name>Ca(2+)</name>
        <dbReference type="ChEBI" id="CHEBI:29108"/>
        <label>1</label>
    </ligand>
</feature>
<feature type="binding site" evidence="4">
    <location>
        <position position="92"/>
    </location>
    <ligand>
        <name>Ca(2+)</name>
        <dbReference type="ChEBI" id="CHEBI:29108"/>
        <label>1</label>
    </ligand>
</feature>
<feature type="binding site" evidence="4">
    <location>
        <position position="117"/>
    </location>
    <ligand>
        <name>Ca(2+)</name>
        <dbReference type="ChEBI" id="CHEBI:29108"/>
        <label>2</label>
    </ligand>
</feature>
<feature type="binding site" evidence="4">
    <location>
        <position position="119"/>
    </location>
    <ligand>
        <name>Ca(2+)</name>
        <dbReference type="ChEBI" id="CHEBI:29108"/>
        <label>2</label>
    </ligand>
</feature>
<feature type="binding site" evidence="4">
    <location>
        <position position="121"/>
    </location>
    <ligand>
        <name>Ca(2+)</name>
        <dbReference type="ChEBI" id="CHEBI:29108"/>
        <label>2</label>
    </ligand>
</feature>
<feature type="binding site" evidence="4">
    <location>
        <position position="123"/>
    </location>
    <ligand>
        <name>Ca(2+)</name>
        <dbReference type="ChEBI" id="CHEBI:29108"/>
        <label>2</label>
    </ligand>
</feature>
<feature type="binding site" evidence="4">
    <location>
        <position position="128"/>
    </location>
    <ligand>
        <name>Ca(2+)</name>
        <dbReference type="ChEBI" id="CHEBI:29108"/>
        <label>2</label>
    </ligand>
</feature>
<feature type="binding site" evidence="5">
    <location>
        <position position="164"/>
    </location>
    <ligand>
        <name>Ca(2+)</name>
        <dbReference type="ChEBI" id="CHEBI:29108"/>
        <label>3</label>
    </ligand>
</feature>
<feature type="binding site" evidence="5">
    <location>
        <position position="166"/>
    </location>
    <ligand>
        <name>Ca(2+)</name>
        <dbReference type="ChEBI" id="CHEBI:29108"/>
        <label>3</label>
    </ligand>
</feature>
<feature type="binding site" evidence="5">
    <location>
        <position position="168"/>
    </location>
    <ligand>
        <name>Ca(2+)</name>
        <dbReference type="ChEBI" id="CHEBI:29108"/>
        <label>3</label>
    </ligand>
</feature>
<feature type="binding site" evidence="5">
    <location>
        <position position="175"/>
    </location>
    <ligand>
        <name>Ca(2+)</name>
        <dbReference type="ChEBI" id="CHEBI:29108"/>
        <label>3</label>
    </ligand>
</feature>
<feature type="binding site" evidence="4">
    <location>
        <position position="201"/>
    </location>
    <ligand>
        <name>Ca(2+)</name>
        <dbReference type="ChEBI" id="CHEBI:29108"/>
        <label>4</label>
    </ligand>
</feature>
<feature type="binding site" evidence="4">
    <location>
        <position position="203"/>
    </location>
    <ligand>
        <name>Ca(2+)</name>
        <dbReference type="ChEBI" id="CHEBI:29108"/>
        <label>4</label>
    </ligand>
</feature>
<feature type="binding site" evidence="4">
    <location>
        <position position="205"/>
    </location>
    <ligand>
        <name>Ca(2+)</name>
        <dbReference type="ChEBI" id="CHEBI:29108"/>
        <label>4</label>
    </ligand>
</feature>
<feature type="binding site" evidence="4">
    <location>
        <position position="212"/>
    </location>
    <ligand>
        <name>Ca(2+)</name>
        <dbReference type="ChEBI" id="CHEBI:29108"/>
        <label>4</label>
    </ligand>
</feature>
<feature type="binding site" evidence="5">
    <location>
        <position position="242"/>
    </location>
    <ligand>
        <name>Ca(2+)</name>
        <dbReference type="ChEBI" id="CHEBI:29108"/>
        <label>5</label>
    </ligand>
</feature>
<feature type="binding site" evidence="5">
    <location>
        <position position="244"/>
    </location>
    <ligand>
        <name>Ca(2+)</name>
        <dbReference type="ChEBI" id="CHEBI:29108"/>
        <label>5</label>
    </ligand>
</feature>
<feature type="binding site" evidence="5">
    <location>
        <position position="246"/>
    </location>
    <ligand>
        <name>Ca(2+)</name>
        <dbReference type="ChEBI" id="CHEBI:29108"/>
        <label>5</label>
    </ligand>
</feature>
<feature type="binding site" evidence="5">
    <location>
        <position position="248"/>
    </location>
    <ligand>
        <name>Ca(2+)</name>
        <dbReference type="ChEBI" id="CHEBI:29108"/>
        <label>5</label>
    </ligand>
</feature>
<feature type="binding site" evidence="5">
    <location>
        <position position="253"/>
    </location>
    <ligand>
        <name>Ca(2+)</name>
        <dbReference type="ChEBI" id="CHEBI:29108"/>
        <label>5</label>
    </ligand>
</feature>
<feature type="binding site" evidence="4">
    <location>
        <position position="278"/>
    </location>
    <ligand>
        <name>Ca(2+)</name>
        <dbReference type="ChEBI" id="CHEBI:29108"/>
        <label>6</label>
    </ligand>
</feature>
<feature type="binding site" evidence="4">
    <location>
        <position position="280"/>
    </location>
    <ligand>
        <name>Ca(2+)</name>
        <dbReference type="ChEBI" id="CHEBI:29108"/>
        <label>6</label>
    </ligand>
</feature>
<feature type="binding site" evidence="4">
    <location>
        <position position="282"/>
    </location>
    <ligand>
        <name>Ca(2+)</name>
        <dbReference type="ChEBI" id="CHEBI:29108"/>
        <label>6</label>
    </ligand>
</feature>
<feature type="binding site" evidence="4">
    <location>
        <position position="284"/>
    </location>
    <ligand>
        <name>Ca(2+)</name>
        <dbReference type="ChEBI" id="CHEBI:29108"/>
        <label>6</label>
    </ligand>
</feature>
<feature type="binding site" evidence="4">
    <location>
        <position position="289"/>
    </location>
    <ligand>
        <name>Ca(2+)</name>
        <dbReference type="ChEBI" id="CHEBI:29108"/>
        <label>6</label>
    </ligand>
</feature>
<feature type="glycosylation site" description="N-linked (GlcNAc...) asparagine" evidence="3">
    <location>
        <position position="131"/>
    </location>
</feature>
<gene>
    <name type="primary">calua</name>
</gene>
<name>CALUA_SALSA</name>
<sequence>MEIRPLLMCFALCVVYATSKPTEKKERIHHDAPLSSREHDDAQGFDYDHDAFLGQKEAKSFDDLSPEESKRRLGVIVEKIDGDSDGFVTEVELRAWIKKAQKKYIYENVDRQWKDFDVNNDGMISWEEYRNVTYGTYLDDPEPDDGYNYQHMMARDERRFKMADQNRDQIANKEEFTAFLHPEEYDHMKDIVVLETMEDIDKNGDGFIDLNEYIGDMYNHEDEMEEPDWVATEREQFSEFRDKNKDGKMDREETMDWILPSDYDHAEAEAKHLVYESDSNKDGKLSKEEILNKYDLFVGSQATDFGEALVRHDEF</sequence>